<protein>
    <recommendedName>
        <fullName evidence="1">Chaperonin GroEL</fullName>
        <ecNumber evidence="1">5.6.1.7</ecNumber>
    </recommendedName>
    <alternativeName>
        <fullName evidence="1">60 kDa chaperonin</fullName>
    </alternativeName>
    <alternativeName>
        <fullName evidence="1">Chaperonin-60</fullName>
        <shortName evidence="1">Cpn60</shortName>
    </alternativeName>
</protein>
<evidence type="ECO:0000255" key="1">
    <source>
        <dbReference type="HAMAP-Rule" id="MF_00600"/>
    </source>
</evidence>
<evidence type="ECO:0000256" key="2">
    <source>
        <dbReference type="SAM" id="MobiDB-lite"/>
    </source>
</evidence>
<feature type="chain" id="PRO_1000130081" description="Chaperonin GroEL">
    <location>
        <begin position="1"/>
        <end position="547"/>
    </location>
</feature>
<feature type="region of interest" description="Disordered" evidence="2">
    <location>
        <begin position="526"/>
        <end position="547"/>
    </location>
</feature>
<feature type="compositionally biased region" description="Gly residues" evidence="2">
    <location>
        <begin position="535"/>
        <end position="547"/>
    </location>
</feature>
<feature type="binding site" evidence="1">
    <location>
        <begin position="30"/>
        <end position="33"/>
    </location>
    <ligand>
        <name>ATP</name>
        <dbReference type="ChEBI" id="CHEBI:30616"/>
    </ligand>
</feature>
<feature type="binding site" evidence="1">
    <location>
        <position position="51"/>
    </location>
    <ligand>
        <name>ATP</name>
        <dbReference type="ChEBI" id="CHEBI:30616"/>
    </ligand>
</feature>
<feature type="binding site" evidence="1">
    <location>
        <begin position="87"/>
        <end position="91"/>
    </location>
    <ligand>
        <name>ATP</name>
        <dbReference type="ChEBI" id="CHEBI:30616"/>
    </ligand>
</feature>
<feature type="binding site" evidence="1">
    <location>
        <position position="415"/>
    </location>
    <ligand>
        <name>ATP</name>
        <dbReference type="ChEBI" id="CHEBI:30616"/>
    </ligand>
</feature>
<feature type="binding site" evidence="1">
    <location>
        <begin position="479"/>
        <end position="481"/>
    </location>
    <ligand>
        <name>ATP</name>
        <dbReference type="ChEBI" id="CHEBI:30616"/>
    </ligand>
</feature>
<feature type="binding site" evidence="1">
    <location>
        <position position="495"/>
    </location>
    <ligand>
        <name>ATP</name>
        <dbReference type="ChEBI" id="CHEBI:30616"/>
    </ligand>
</feature>
<organism>
    <name type="scientific">Xylella fastidiosa (strain M12)</name>
    <dbReference type="NCBI Taxonomy" id="405440"/>
    <lineage>
        <taxon>Bacteria</taxon>
        <taxon>Pseudomonadati</taxon>
        <taxon>Pseudomonadota</taxon>
        <taxon>Gammaproteobacteria</taxon>
        <taxon>Lysobacterales</taxon>
        <taxon>Lysobacteraceae</taxon>
        <taxon>Xylella</taxon>
    </lineage>
</organism>
<accession>B0U418</accession>
<comment type="function">
    <text evidence="1">Together with its co-chaperonin GroES, plays an essential role in assisting protein folding. The GroEL-GroES system forms a nano-cage that allows encapsulation of the non-native substrate proteins and provides a physical environment optimized to promote and accelerate protein folding.</text>
</comment>
<comment type="catalytic activity">
    <reaction evidence="1">
        <text>ATP + H2O + a folded polypeptide = ADP + phosphate + an unfolded polypeptide.</text>
        <dbReference type="EC" id="5.6.1.7"/>
    </reaction>
</comment>
<comment type="subunit">
    <text evidence="1">Forms a cylinder of 14 subunits composed of two heptameric rings stacked back-to-back. Interacts with the co-chaperonin GroES.</text>
</comment>
<comment type="subcellular location">
    <subcellularLocation>
        <location evidence="1">Cytoplasm</location>
    </subcellularLocation>
</comment>
<comment type="similarity">
    <text evidence="1">Belongs to the chaperonin (HSP60) family.</text>
</comment>
<dbReference type="EC" id="5.6.1.7" evidence="1"/>
<dbReference type="EMBL" id="CP000941">
    <property type="protein sequence ID" value="ACA12597.1"/>
    <property type="molecule type" value="Genomic_DNA"/>
</dbReference>
<dbReference type="RefSeq" id="WP_004083508.1">
    <property type="nucleotide sequence ID" value="NC_010513.1"/>
</dbReference>
<dbReference type="SMR" id="B0U418"/>
<dbReference type="KEGG" id="xfm:Xfasm12_1693"/>
<dbReference type="HOGENOM" id="CLU_016503_3_0_6"/>
<dbReference type="GO" id="GO:0005737">
    <property type="term" value="C:cytoplasm"/>
    <property type="evidence" value="ECO:0007669"/>
    <property type="project" value="UniProtKB-SubCell"/>
</dbReference>
<dbReference type="GO" id="GO:0005524">
    <property type="term" value="F:ATP binding"/>
    <property type="evidence" value="ECO:0007669"/>
    <property type="project" value="UniProtKB-UniRule"/>
</dbReference>
<dbReference type="GO" id="GO:0140662">
    <property type="term" value="F:ATP-dependent protein folding chaperone"/>
    <property type="evidence" value="ECO:0007669"/>
    <property type="project" value="InterPro"/>
</dbReference>
<dbReference type="GO" id="GO:0016853">
    <property type="term" value="F:isomerase activity"/>
    <property type="evidence" value="ECO:0007669"/>
    <property type="project" value="UniProtKB-KW"/>
</dbReference>
<dbReference type="GO" id="GO:0051082">
    <property type="term" value="F:unfolded protein binding"/>
    <property type="evidence" value="ECO:0007669"/>
    <property type="project" value="UniProtKB-UniRule"/>
</dbReference>
<dbReference type="GO" id="GO:0042026">
    <property type="term" value="P:protein refolding"/>
    <property type="evidence" value="ECO:0007669"/>
    <property type="project" value="UniProtKB-UniRule"/>
</dbReference>
<dbReference type="CDD" id="cd03344">
    <property type="entry name" value="GroEL"/>
    <property type="match status" value="1"/>
</dbReference>
<dbReference type="FunFam" id="1.10.560.10:FF:000001">
    <property type="entry name" value="60 kDa chaperonin"/>
    <property type="match status" value="1"/>
</dbReference>
<dbReference type="FunFam" id="3.50.7.10:FF:000001">
    <property type="entry name" value="60 kDa chaperonin"/>
    <property type="match status" value="1"/>
</dbReference>
<dbReference type="Gene3D" id="3.50.7.10">
    <property type="entry name" value="GroEL"/>
    <property type="match status" value="1"/>
</dbReference>
<dbReference type="Gene3D" id="1.10.560.10">
    <property type="entry name" value="GroEL-like equatorial domain"/>
    <property type="match status" value="1"/>
</dbReference>
<dbReference type="Gene3D" id="3.30.260.10">
    <property type="entry name" value="TCP-1-like chaperonin intermediate domain"/>
    <property type="match status" value="1"/>
</dbReference>
<dbReference type="HAMAP" id="MF_00600">
    <property type="entry name" value="CH60"/>
    <property type="match status" value="1"/>
</dbReference>
<dbReference type="InterPro" id="IPR018370">
    <property type="entry name" value="Chaperonin_Cpn60_CS"/>
</dbReference>
<dbReference type="InterPro" id="IPR001844">
    <property type="entry name" value="Cpn60/GroEL"/>
</dbReference>
<dbReference type="InterPro" id="IPR002423">
    <property type="entry name" value="Cpn60/GroEL/TCP-1"/>
</dbReference>
<dbReference type="InterPro" id="IPR027409">
    <property type="entry name" value="GroEL-like_apical_dom_sf"/>
</dbReference>
<dbReference type="InterPro" id="IPR027413">
    <property type="entry name" value="GROEL-like_equatorial_sf"/>
</dbReference>
<dbReference type="InterPro" id="IPR027410">
    <property type="entry name" value="TCP-1-like_intermed_sf"/>
</dbReference>
<dbReference type="NCBIfam" id="TIGR02348">
    <property type="entry name" value="GroEL"/>
    <property type="match status" value="1"/>
</dbReference>
<dbReference type="NCBIfam" id="NF000592">
    <property type="entry name" value="PRK00013.1"/>
    <property type="match status" value="1"/>
</dbReference>
<dbReference type="NCBIfam" id="NF009487">
    <property type="entry name" value="PRK12849.1"/>
    <property type="match status" value="1"/>
</dbReference>
<dbReference type="NCBIfam" id="NF009488">
    <property type="entry name" value="PRK12850.1"/>
    <property type="match status" value="1"/>
</dbReference>
<dbReference type="NCBIfam" id="NF009489">
    <property type="entry name" value="PRK12851.1"/>
    <property type="match status" value="1"/>
</dbReference>
<dbReference type="PANTHER" id="PTHR45633">
    <property type="entry name" value="60 KDA HEAT SHOCK PROTEIN, MITOCHONDRIAL"/>
    <property type="match status" value="1"/>
</dbReference>
<dbReference type="Pfam" id="PF00118">
    <property type="entry name" value="Cpn60_TCP1"/>
    <property type="match status" value="1"/>
</dbReference>
<dbReference type="PRINTS" id="PR00298">
    <property type="entry name" value="CHAPERONIN60"/>
</dbReference>
<dbReference type="SUPFAM" id="SSF52029">
    <property type="entry name" value="GroEL apical domain-like"/>
    <property type="match status" value="1"/>
</dbReference>
<dbReference type="SUPFAM" id="SSF48592">
    <property type="entry name" value="GroEL equatorial domain-like"/>
    <property type="match status" value="1"/>
</dbReference>
<dbReference type="SUPFAM" id="SSF54849">
    <property type="entry name" value="GroEL-intermediate domain like"/>
    <property type="match status" value="1"/>
</dbReference>
<dbReference type="PROSITE" id="PS00296">
    <property type="entry name" value="CHAPERONINS_CPN60"/>
    <property type="match status" value="1"/>
</dbReference>
<proteinExistence type="inferred from homology"/>
<reference key="1">
    <citation type="journal article" date="2010" name="J. Bacteriol.">
        <title>Whole genome sequences of two Xylella fastidiosa strains (M12 and M23) causing almond leaf scorch disease in California.</title>
        <authorList>
            <person name="Chen J."/>
            <person name="Xie G."/>
            <person name="Han S."/>
            <person name="Chertkov O."/>
            <person name="Sims D."/>
            <person name="Civerolo E.L."/>
        </authorList>
    </citation>
    <scope>NUCLEOTIDE SEQUENCE [LARGE SCALE GENOMIC DNA]</scope>
    <source>
        <strain>M12</strain>
    </source>
</reference>
<sequence length="547" mass="57881">MAAKEIIFSEKARSRMVYGVNLLANAVKATLGPKGRNVVLDKNFGSPIITKDGVSVAKEIELADKFENMGAQMLKEVASKTNDHAGDGTTTATVLAQALIREGCKAVAAGMNPMDLKRGIDKAVIAAVTELKKISKPTSDDKAIAQVATISANSDESIGNIIAEAMKKVGKEGVITIEEGTTLENELDVVEGMQFDRGYSSPYFINNQQSQIVELDNPYILLHDKKISNVRDLLTVLDAVAKESKQLLIVAEEVEGEALATLVVNNIRGIIKVCAVKAPGFGDRRKAMLEDMAVLTGGTVISEEVGLSLEKATTSHLGKAKKVRVSKENTTIIDGMGDNDAINGRVKQIKTQIEETTSDYDREKLQERVAKLAGGVAVIKVGAATEVEMKEKKARVDDALLATRAAVEEGVIPGGGVALIRVITAISNLKGANEDQTHGIQIALRAMEAPLREIVANAGEEPSVILNKVKEGKGNFGYNAATGEFGDMVNFGILDPTKVTRSALQNAASIAGLMITTEAMIAEAPKKDEPTPPAAGGGMGGMGGMDF</sequence>
<name>CH60_XYLFM</name>
<gene>
    <name evidence="1" type="primary">groEL</name>
    <name evidence="1" type="synonym">groL</name>
    <name type="ordered locus">Xfasm12_1693</name>
</gene>
<keyword id="KW-0067">ATP-binding</keyword>
<keyword id="KW-0143">Chaperone</keyword>
<keyword id="KW-0963">Cytoplasm</keyword>
<keyword id="KW-0413">Isomerase</keyword>
<keyword id="KW-0547">Nucleotide-binding</keyword>